<keyword id="KW-0349">Heme</keyword>
<keyword id="KW-0408">Iron</keyword>
<keyword id="KW-0479">Metal-binding</keyword>
<keyword id="KW-0561">Oxygen transport</keyword>
<keyword id="KW-0813">Transport</keyword>
<name>HBBB_SERQU</name>
<reference key="1">
    <citation type="submission" date="1999-11" db="EMBL/GenBank/DDBJ databases">
        <title>Yellowtail's mRNA for hemoglobin beta chain B.</title>
        <authorList>
            <person name="Sakai M."/>
            <person name="Okamoto K."/>
        </authorList>
    </citation>
    <scope>NUCLEOTIDE SEQUENCE [MRNA]</scope>
    <source>
        <tissue>Kidney</tissue>
    </source>
</reference>
<protein>
    <recommendedName>
        <fullName>Hemoglobin subunit beta-B</fullName>
    </recommendedName>
    <alternativeName>
        <fullName>Beta-B-globin</fullName>
    </alternativeName>
    <alternativeName>
        <fullName>Hemoglobin beta-B chain</fullName>
    </alternativeName>
</protein>
<gene>
    <name type="primary">hbb2</name>
</gene>
<feature type="initiator methionine" description="Removed" evidence="1">
    <location>
        <position position="1"/>
    </location>
</feature>
<feature type="chain" id="PRO_0000053104" description="Hemoglobin subunit beta-B">
    <location>
        <begin position="2"/>
        <end position="148"/>
    </location>
</feature>
<feature type="domain" description="Globin" evidence="2">
    <location>
        <begin position="3"/>
        <end position="148"/>
    </location>
</feature>
<feature type="binding site" description="distal binding residue">
    <location>
        <position position="64"/>
    </location>
    <ligand>
        <name>heme b</name>
        <dbReference type="ChEBI" id="CHEBI:60344"/>
    </ligand>
    <ligandPart>
        <name>Fe</name>
        <dbReference type="ChEBI" id="CHEBI:18248"/>
    </ligandPart>
</feature>
<feature type="binding site" description="proximal binding residue">
    <location>
        <position position="93"/>
    </location>
    <ligand>
        <name>heme b</name>
        <dbReference type="ChEBI" id="CHEBI:60344"/>
    </ligand>
    <ligandPart>
        <name>Fe</name>
        <dbReference type="ChEBI" id="CHEBI:18248"/>
    </ligandPart>
</feature>
<proteinExistence type="evidence at transcript level"/>
<accession>Q9PVM1</accession>
<dbReference type="EMBL" id="AB034642">
    <property type="protein sequence ID" value="BAA86221.1"/>
    <property type="molecule type" value="mRNA"/>
</dbReference>
<dbReference type="SMR" id="Q9PVM1"/>
<dbReference type="GO" id="GO:0072562">
    <property type="term" value="C:blood microparticle"/>
    <property type="evidence" value="ECO:0007669"/>
    <property type="project" value="TreeGrafter"/>
</dbReference>
<dbReference type="GO" id="GO:0031838">
    <property type="term" value="C:haptoglobin-hemoglobin complex"/>
    <property type="evidence" value="ECO:0007669"/>
    <property type="project" value="TreeGrafter"/>
</dbReference>
<dbReference type="GO" id="GO:0005833">
    <property type="term" value="C:hemoglobin complex"/>
    <property type="evidence" value="ECO:0007669"/>
    <property type="project" value="InterPro"/>
</dbReference>
<dbReference type="GO" id="GO:0031720">
    <property type="term" value="F:haptoglobin binding"/>
    <property type="evidence" value="ECO:0007669"/>
    <property type="project" value="TreeGrafter"/>
</dbReference>
<dbReference type="GO" id="GO:0020037">
    <property type="term" value="F:heme binding"/>
    <property type="evidence" value="ECO:0007669"/>
    <property type="project" value="InterPro"/>
</dbReference>
<dbReference type="GO" id="GO:0046872">
    <property type="term" value="F:metal ion binding"/>
    <property type="evidence" value="ECO:0007669"/>
    <property type="project" value="UniProtKB-KW"/>
</dbReference>
<dbReference type="GO" id="GO:0043177">
    <property type="term" value="F:organic acid binding"/>
    <property type="evidence" value="ECO:0007669"/>
    <property type="project" value="TreeGrafter"/>
</dbReference>
<dbReference type="GO" id="GO:0019825">
    <property type="term" value="F:oxygen binding"/>
    <property type="evidence" value="ECO:0007669"/>
    <property type="project" value="InterPro"/>
</dbReference>
<dbReference type="GO" id="GO:0005344">
    <property type="term" value="F:oxygen carrier activity"/>
    <property type="evidence" value="ECO:0007669"/>
    <property type="project" value="UniProtKB-KW"/>
</dbReference>
<dbReference type="GO" id="GO:0004601">
    <property type="term" value="F:peroxidase activity"/>
    <property type="evidence" value="ECO:0007669"/>
    <property type="project" value="TreeGrafter"/>
</dbReference>
<dbReference type="GO" id="GO:0042744">
    <property type="term" value="P:hydrogen peroxide catabolic process"/>
    <property type="evidence" value="ECO:0007669"/>
    <property type="project" value="TreeGrafter"/>
</dbReference>
<dbReference type="CDD" id="cd08925">
    <property type="entry name" value="Hb-beta-like"/>
    <property type="match status" value="1"/>
</dbReference>
<dbReference type="FunFam" id="1.10.490.10:FF:000001">
    <property type="entry name" value="Hemoglobin subunit beta"/>
    <property type="match status" value="1"/>
</dbReference>
<dbReference type="Gene3D" id="1.10.490.10">
    <property type="entry name" value="Globins"/>
    <property type="match status" value="1"/>
</dbReference>
<dbReference type="InterPro" id="IPR000971">
    <property type="entry name" value="Globin"/>
</dbReference>
<dbReference type="InterPro" id="IPR009050">
    <property type="entry name" value="Globin-like_sf"/>
</dbReference>
<dbReference type="InterPro" id="IPR012292">
    <property type="entry name" value="Globin/Proto"/>
</dbReference>
<dbReference type="InterPro" id="IPR002337">
    <property type="entry name" value="Hemoglobin_b"/>
</dbReference>
<dbReference type="InterPro" id="IPR050056">
    <property type="entry name" value="Hemoglobin_oxygen_transport"/>
</dbReference>
<dbReference type="PANTHER" id="PTHR11442">
    <property type="entry name" value="HEMOGLOBIN FAMILY MEMBER"/>
    <property type="match status" value="1"/>
</dbReference>
<dbReference type="PANTHER" id="PTHR11442:SF102">
    <property type="entry name" value="HEMOGLOBIN SUBUNIT BETA-1-RELATED"/>
    <property type="match status" value="1"/>
</dbReference>
<dbReference type="Pfam" id="PF00042">
    <property type="entry name" value="Globin"/>
    <property type="match status" value="1"/>
</dbReference>
<dbReference type="PRINTS" id="PR00814">
    <property type="entry name" value="BETAHAEM"/>
</dbReference>
<dbReference type="SUPFAM" id="SSF46458">
    <property type="entry name" value="Globin-like"/>
    <property type="match status" value="1"/>
</dbReference>
<dbReference type="PROSITE" id="PS01033">
    <property type="entry name" value="GLOBIN"/>
    <property type="match status" value="1"/>
</dbReference>
<comment type="function">
    <text>Involved in oxygen transport from gills to the various peripheral tissues.</text>
</comment>
<comment type="subunit">
    <text>Heterotetramer of two alpha chains and two beta chains.</text>
</comment>
<comment type="tissue specificity">
    <text>Red blood cells.</text>
</comment>
<comment type="similarity">
    <text evidence="2">Belongs to the globin family.</text>
</comment>
<organism>
    <name type="scientific">Seriola quinqueradiata</name>
    <name type="common">Five-ray yellowtail</name>
    <dbReference type="NCBI Taxonomy" id="8161"/>
    <lineage>
        <taxon>Eukaryota</taxon>
        <taxon>Metazoa</taxon>
        <taxon>Chordata</taxon>
        <taxon>Craniata</taxon>
        <taxon>Vertebrata</taxon>
        <taxon>Euteleostomi</taxon>
        <taxon>Actinopterygii</taxon>
        <taxon>Neopterygii</taxon>
        <taxon>Teleostei</taxon>
        <taxon>Neoteleostei</taxon>
        <taxon>Acanthomorphata</taxon>
        <taxon>Carangaria</taxon>
        <taxon>Carangiformes</taxon>
        <taxon>Carangidae</taxon>
        <taxon>Seriola</taxon>
    </lineage>
</organism>
<sequence length="148" mass="16329">MVDWTDAERAAITSLWGKIDVGEIGPQALTRLLIVYPWTQRHFTTFGNVSTNAAILGNPKVAQHGKTVMGGLENAVKNLDDIKNTYAKLSRMHSEKLHVDPDNFRALAECISVCVAAKFGKQAFTADVQEAWQKFLSAVVSALGRQYH</sequence>
<evidence type="ECO:0000250" key="1"/>
<evidence type="ECO:0000255" key="2">
    <source>
        <dbReference type="PROSITE-ProRule" id="PRU00238"/>
    </source>
</evidence>